<gene>
    <name type="primary">ald1</name>
    <name type="ordered locus">SAR1451</name>
</gene>
<dbReference type="EC" id="1.4.1.1"/>
<dbReference type="EMBL" id="BX571856">
    <property type="protein sequence ID" value="CAG40448.1"/>
    <property type="molecule type" value="Genomic_DNA"/>
</dbReference>
<dbReference type="SMR" id="Q6GGW9"/>
<dbReference type="KEGG" id="sar:SAR1451"/>
<dbReference type="HOGENOM" id="CLU_003376_3_0_9"/>
<dbReference type="UniPathway" id="UPA00527">
    <property type="reaction ID" value="UER00585"/>
</dbReference>
<dbReference type="Proteomes" id="UP000000596">
    <property type="component" value="Chromosome"/>
</dbReference>
<dbReference type="GO" id="GO:0005886">
    <property type="term" value="C:plasma membrane"/>
    <property type="evidence" value="ECO:0007669"/>
    <property type="project" value="TreeGrafter"/>
</dbReference>
<dbReference type="GO" id="GO:0000286">
    <property type="term" value="F:alanine dehydrogenase activity"/>
    <property type="evidence" value="ECO:0007669"/>
    <property type="project" value="UniProtKB-EC"/>
</dbReference>
<dbReference type="GO" id="GO:0042853">
    <property type="term" value="P:L-alanine catabolic process"/>
    <property type="evidence" value="ECO:0007669"/>
    <property type="project" value="UniProtKB-UniPathway"/>
</dbReference>
<dbReference type="CDD" id="cd05305">
    <property type="entry name" value="L-AlaDH"/>
    <property type="match status" value="1"/>
</dbReference>
<dbReference type="FunFam" id="3.40.50.720:FF:000433">
    <property type="entry name" value="Alanine dehydrogenase 1"/>
    <property type="match status" value="1"/>
</dbReference>
<dbReference type="Gene3D" id="3.40.50.720">
    <property type="entry name" value="NAD(P)-binding Rossmann-like Domain"/>
    <property type="match status" value="2"/>
</dbReference>
<dbReference type="InterPro" id="IPR008141">
    <property type="entry name" value="Ala_DH"/>
</dbReference>
<dbReference type="InterPro" id="IPR008143">
    <property type="entry name" value="Ala_DH/PNT_CS2"/>
</dbReference>
<dbReference type="InterPro" id="IPR008142">
    <property type="entry name" value="AlaDH/PNT_CS1"/>
</dbReference>
<dbReference type="InterPro" id="IPR007886">
    <property type="entry name" value="AlaDH/PNT_N"/>
</dbReference>
<dbReference type="InterPro" id="IPR007698">
    <property type="entry name" value="AlaDH/PNT_NAD(H)-bd"/>
</dbReference>
<dbReference type="InterPro" id="IPR036291">
    <property type="entry name" value="NAD(P)-bd_dom_sf"/>
</dbReference>
<dbReference type="NCBIfam" id="TIGR00518">
    <property type="entry name" value="alaDH"/>
    <property type="match status" value="1"/>
</dbReference>
<dbReference type="PANTHER" id="PTHR42795">
    <property type="entry name" value="ALANINE DEHYDROGENASE"/>
    <property type="match status" value="1"/>
</dbReference>
<dbReference type="PANTHER" id="PTHR42795:SF1">
    <property type="entry name" value="ALANINE DEHYDROGENASE"/>
    <property type="match status" value="1"/>
</dbReference>
<dbReference type="Pfam" id="PF01262">
    <property type="entry name" value="AlaDh_PNT_C"/>
    <property type="match status" value="1"/>
</dbReference>
<dbReference type="Pfam" id="PF05222">
    <property type="entry name" value="AlaDh_PNT_N"/>
    <property type="match status" value="1"/>
</dbReference>
<dbReference type="PIRSF" id="PIRSF000183">
    <property type="entry name" value="Alanine_dh"/>
    <property type="match status" value="1"/>
</dbReference>
<dbReference type="SMART" id="SM01002">
    <property type="entry name" value="AlaDh_PNT_C"/>
    <property type="match status" value="1"/>
</dbReference>
<dbReference type="SMART" id="SM01003">
    <property type="entry name" value="AlaDh_PNT_N"/>
    <property type="match status" value="1"/>
</dbReference>
<dbReference type="SUPFAM" id="SSF52283">
    <property type="entry name" value="Formate/glycerate dehydrogenase catalytic domain-like"/>
    <property type="match status" value="1"/>
</dbReference>
<dbReference type="SUPFAM" id="SSF51735">
    <property type="entry name" value="NAD(P)-binding Rossmann-fold domains"/>
    <property type="match status" value="1"/>
</dbReference>
<dbReference type="PROSITE" id="PS00836">
    <property type="entry name" value="ALADH_PNT_1"/>
    <property type="match status" value="1"/>
</dbReference>
<dbReference type="PROSITE" id="PS00837">
    <property type="entry name" value="ALADH_PNT_2"/>
    <property type="match status" value="1"/>
</dbReference>
<keyword id="KW-0520">NAD</keyword>
<keyword id="KW-0560">Oxidoreductase</keyword>
<name>DHA1_STAAR</name>
<proteinExistence type="inferred from homology"/>
<accession>Q6GGW9</accession>
<sequence>MLVAVVKELKQGEGRVACTPENVRKLTDAGHKVIVEKNAGIGSGFSNDMYEKEGAKIVTHEQAWEADLVIKVKEPHESEYQYFKKNQIIWGFLHLASSKEIVEKMQEVGVTAISGETIIKNGKAELLAPMSAIAGQRSAIMGAYYSEAQHGGQGTLVTGVHENVDIPGSTYVIFGGGVAATNAANVALGLNAKVIIIELNDDRIKYLEDMYAEKDVTVVKSTPENLAEQIKKADVFISTILIPGAKPPKLVTREMVKSMKKGSVLIDIAIDQGGTIETIRPTTISDPVYEEEGVIHYGVPNQPGAVPRTSTMALAQGNIDYILEICDKGLEQAIKDNEALSTGVNIYQGQVTNQGLATSHDLDYKEILNVIE</sequence>
<evidence type="ECO:0000250" key="1"/>
<evidence type="ECO:0000255" key="2"/>
<evidence type="ECO:0000305" key="3"/>
<reference key="1">
    <citation type="journal article" date="2004" name="Proc. Natl. Acad. Sci. U.S.A.">
        <title>Complete genomes of two clinical Staphylococcus aureus strains: evidence for the rapid evolution of virulence and drug resistance.</title>
        <authorList>
            <person name="Holden M.T.G."/>
            <person name="Feil E.J."/>
            <person name="Lindsay J.A."/>
            <person name="Peacock S.J."/>
            <person name="Day N.P.J."/>
            <person name="Enright M.C."/>
            <person name="Foster T.J."/>
            <person name="Moore C.E."/>
            <person name="Hurst L."/>
            <person name="Atkin R."/>
            <person name="Barron A."/>
            <person name="Bason N."/>
            <person name="Bentley S.D."/>
            <person name="Chillingworth C."/>
            <person name="Chillingworth T."/>
            <person name="Churcher C."/>
            <person name="Clark L."/>
            <person name="Corton C."/>
            <person name="Cronin A."/>
            <person name="Doggett J."/>
            <person name="Dowd L."/>
            <person name="Feltwell T."/>
            <person name="Hance Z."/>
            <person name="Harris B."/>
            <person name="Hauser H."/>
            <person name="Holroyd S."/>
            <person name="Jagels K."/>
            <person name="James K.D."/>
            <person name="Lennard N."/>
            <person name="Line A."/>
            <person name="Mayes R."/>
            <person name="Moule S."/>
            <person name="Mungall K."/>
            <person name="Ormond D."/>
            <person name="Quail M.A."/>
            <person name="Rabbinowitsch E."/>
            <person name="Rutherford K.M."/>
            <person name="Sanders M."/>
            <person name="Sharp S."/>
            <person name="Simmonds M."/>
            <person name="Stevens K."/>
            <person name="Whitehead S."/>
            <person name="Barrell B.G."/>
            <person name="Spratt B.G."/>
            <person name="Parkhill J."/>
        </authorList>
    </citation>
    <scope>NUCLEOTIDE SEQUENCE [LARGE SCALE GENOMIC DNA]</scope>
    <source>
        <strain>MRSA252</strain>
    </source>
</reference>
<comment type="function">
    <text evidence="1">May play a role in cell wall synthesis as L-alanine is an important constituent of the peptidoglycan layer.</text>
</comment>
<comment type="catalytic activity">
    <reaction>
        <text>L-alanine + NAD(+) + H2O = pyruvate + NH4(+) + NADH + H(+)</text>
        <dbReference type="Rhea" id="RHEA:18405"/>
        <dbReference type="ChEBI" id="CHEBI:15361"/>
        <dbReference type="ChEBI" id="CHEBI:15377"/>
        <dbReference type="ChEBI" id="CHEBI:15378"/>
        <dbReference type="ChEBI" id="CHEBI:28938"/>
        <dbReference type="ChEBI" id="CHEBI:57540"/>
        <dbReference type="ChEBI" id="CHEBI:57945"/>
        <dbReference type="ChEBI" id="CHEBI:57972"/>
        <dbReference type="EC" id="1.4.1.1"/>
    </reaction>
</comment>
<comment type="pathway">
    <text>Amino-acid degradation; L-alanine degradation via dehydrogenase pathway; NH(3) and pyruvate from L-alanine: step 1/1.</text>
</comment>
<comment type="similarity">
    <text evidence="3">Belongs to the AlaDH/PNT family.</text>
</comment>
<protein>
    <recommendedName>
        <fullName>Alanine dehydrogenase 1</fullName>
        <ecNumber>1.4.1.1</ecNumber>
    </recommendedName>
</protein>
<organism>
    <name type="scientific">Staphylococcus aureus (strain MRSA252)</name>
    <dbReference type="NCBI Taxonomy" id="282458"/>
    <lineage>
        <taxon>Bacteria</taxon>
        <taxon>Bacillati</taxon>
        <taxon>Bacillota</taxon>
        <taxon>Bacilli</taxon>
        <taxon>Bacillales</taxon>
        <taxon>Staphylococcaceae</taxon>
        <taxon>Staphylococcus</taxon>
    </lineage>
</organism>
<feature type="chain" id="PRO_0000198998" description="Alanine dehydrogenase 1">
    <location>
        <begin position="1"/>
        <end position="372"/>
    </location>
</feature>
<feature type="active site" evidence="2">
    <location>
        <position position="94"/>
    </location>
</feature>
<feature type="binding site" evidence="1">
    <location>
        <begin position="170"/>
        <end position="200"/>
    </location>
    <ligand>
        <name>NAD(+)</name>
        <dbReference type="ChEBI" id="CHEBI:57540"/>
    </ligand>
</feature>